<evidence type="ECO:0000255" key="1">
    <source>
        <dbReference type="HAMAP-Rule" id="MF_01925"/>
    </source>
</evidence>
<keyword id="KW-0028">Amino-acid biosynthesis</keyword>
<keyword id="KW-0963">Cytoplasm</keyword>
<keyword id="KW-0521">NADP</keyword>
<keyword id="KW-0560">Oxidoreductase</keyword>
<keyword id="KW-0641">Proline biosynthesis</keyword>
<reference key="1">
    <citation type="journal article" date="1999" name="Nature">
        <title>Genomic sequence comparison of two unrelated isolates of the human gastric pathogen Helicobacter pylori.</title>
        <authorList>
            <person name="Alm R.A."/>
            <person name="Ling L.-S.L."/>
            <person name="Moir D.T."/>
            <person name="King B.L."/>
            <person name="Brown E.D."/>
            <person name="Doig P.C."/>
            <person name="Smith D.R."/>
            <person name="Noonan B."/>
            <person name="Guild B.C."/>
            <person name="deJonge B.L."/>
            <person name="Carmel G."/>
            <person name="Tummino P.J."/>
            <person name="Caruso A."/>
            <person name="Uria-Nickelsen M."/>
            <person name="Mills D.M."/>
            <person name="Ives C."/>
            <person name="Gibson R."/>
            <person name="Merberg D."/>
            <person name="Mills S.D."/>
            <person name="Jiang Q."/>
            <person name="Taylor D.E."/>
            <person name="Vovis G.F."/>
            <person name="Trust T.J."/>
        </authorList>
    </citation>
    <scope>NUCLEOTIDE SEQUENCE [LARGE SCALE GENOMIC DNA]</scope>
    <source>
        <strain>J99 / ATCC 700824</strain>
    </source>
</reference>
<feature type="chain" id="PRO_0000187292" description="Pyrroline-5-carboxylate reductase">
    <location>
        <begin position="1"/>
        <end position="257"/>
    </location>
</feature>
<dbReference type="EC" id="1.5.1.2" evidence="1"/>
<dbReference type="EMBL" id="AE001439">
    <property type="protein sequence ID" value="AAD06667.1"/>
    <property type="molecule type" value="Genomic_DNA"/>
</dbReference>
<dbReference type="PIR" id="E71850">
    <property type="entry name" value="E71850"/>
</dbReference>
<dbReference type="RefSeq" id="WP_000404501.1">
    <property type="nucleotide sequence ID" value="NC_000921.1"/>
</dbReference>
<dbReference type="SMR" id="Q9ZK56"/>
<dbReference type="KEGG" id="hpj:jhp_1085"/>
<dbReference type="PATRIC" id="fig|85963.30.peg.1497"/>
<dbReference type="eggNOG" id="COG0345">
    <property type="taxonomic scope" value="Bacteria"/>
</dbReference>
<dbReference type="UniPathway" id="UPA00098">
    <property type="reaction ID" value="UER00361"/>
</dbReference>
<dbReference type="Proteomes" id="UP000000804">
    <property type="component" value="Chromosome"/>
</dbReference>
<dbReference type="GO" id="GO:0005737">
    <property type="term" value="C:cytoplasm"/>
    <property type="evidence" value="ECO:0007669"/>
    <property type="project" value="UniProtKB-SubCell"/>
</dbReference>
<dbReference type="GO" id="GO:0004735">
    <property type="term" value="F:pyrroline-5-carboxylate reductase activity"/>
    <property type="evidence" value="ECO:0007669"/>
    <property type="project" value="UniProtKB-UniRule"/>
</dbReference>
<dbReference type="GO" id="GO:0055129">
    <property type="term" value="P:L-proline biosynthetic process"/>
    <property type="evidence" value="ECO:0007669"/>
    <property type="project" value="UniProtKB-UniRule"/>
</dbReference>
<dbReference type="Gene3D" id="3.40.50.720">
    <property type="entry name" value="NAD(P)-binding Rossmann-like Domain"/>
    <property type="match status" value="1"/>
</dbReference>
<dbReference type="Gene3D" id="1.10.3730.10">
    <property type="entry name" value="ProC C-terminal domain-like"/>
    <property type="match status" value="1"/>
</dbReference>
<dbReference type="HAMAP" id="MF_01925">
    <property type="entry name" value="P5C_reductase"/>
    <property type="match status" value="1"/>
</dbReference>
<dbReference type="InterPro" id="IPR008927">
    <property type="entry name" value="6-PGluconate_DH-like_C_sf"/>
</dbReference>
<dbReference type="InterPro" id="IPR036291">
    <property type="entry name" value="NAD(P)-bd_dom_sf"/>
</dbReference>
<dbReference type="InterPro" id="IPR028939">
    <property type="entry name" value="P5C_Rdtase_cat_N"/>
</dbReference>
<dbReference type="InterPro" id="IPR053790">
    <property type="entry name" value="P5CR-like_CS"/>
</dbReference>
<dbReference type="InterPro" id="IPR029036">
    <property type="entry name" value="P5CR_dimer"/>
</dbReference>
<dbReference type="InterPro" id="IPR000304">
    <property type="entry name" value="Pyrroline-COOH_reductase"/>
</dbReference>
<dbReference type="NCBIfam" id="TIGR00112">
    <property type="entry name" value="proC"/>
    <property type="match status" value="1"/>
</dbReference>
<dbReference type="PANTHER" id="PTHR11645">
    <property type="entry name" value="PYRROLINE-5-CARBOXYLATE REDUCTASE"/>
    <property type="match status" value="1"/>
</dbReference>
<dbReference type="PANTHER" id="PTHR11645:SF0">
    <property type="entry name" value="PYRROLINE-5-CARBOXYLATE REDUCTASE 3"/>
    <property type="match status" value="1"/>
</dbReference>
<dbReference type="Pfam" id="PF03807">
    <property type="entry name" value="F420_oxidored"/>
    <property type="match status" value="1"/>
</dbReference>
<dbReference type="Pfam" id="PF14748">
    <property type="entry name" value="P5CR_dimer"/>
    <property type="match status" value="1"/>
</dbReference>
<dbReference type="PIRSF" id="PIRSF000193">
    <property type="entry name" value="Pyrrol-5-carb_rd"/>
    <property type="match status" value="1"/>
</dbReference>
<dbReference type="SUPFAM" id="SSF48179">
    <property type="entry name" value="6-phosphogluconate dehydrogenase C-terminal domain-like"/>
    <property type="match status" value="1"/>
</dbReference>
<dbReference type="SUPFAM" id="SSF51735">
    <property type="entry name" value="NAD(P)-binding Rossmann-fold domains"/>
    <property type="match status" value="1"/>
</dbReference>
<dbReference type="PROSITE" id="PS00521">
    <property type="entry name" value="P5CR"/>
    <property type="match status" value="1"/>
</dbReference>
<accession>Q9ZK56</accession>
<comment type="function">
    <text evidence="1">Catalyzes the reduction of 1-pyrroline-5-carboxylate (PCA) to L-proline.</text>
</comment>
<comment type="catalytic activity">
    <reaction evidence="1">
        <text>L-proline + NADP(+) = (S)-1-pyrroline-5-carboxylate + NADPH + 2 H(+)</text>
        <dbReference type="Rhea" id="RHEA:14109"/>
        <dbReference type="ChEBI" id="CHEBI:15378"/>
        <dbReference type="ChEBI" id="CHEBI:17388"/>
        <dbReference type="ChEBI" id="CHEBI:57783"/>
        <dbReference type="ChEBI" id="CHEBI:58349"/>
        <dbReference type="ChEBI" id="CHEBI:60039"/>
        <dbReference type="EC" id="1.5.1.2"/>
    </reaction>
</comment>
<comment type="catalytic activity">
    <reaction evidence="1">
        <text>L-proline + NAD(+) = (S)-1-pyrroline-5-carboxylate + NADH + 2 H(+)</text>
        <dbReference type="Rhea" id="RHEA:14105"/>
        <dbReference type="ChEBI" id="CHEBI:15378"/>
        <dbReference type="ChEBI" id="CHEBI:17388"/>
        <dbReference type="ChEBI" id="CHEBI:57540"/>
        <dbReference type="ChEBI" id="CHEBI:57945"/>
        <dbReference type="ChEBI" id="CHEBI:60039"/>
        <dbReference type="EC" id="1.5.1.2"/>
    </reaction>
</comment>
<comment type="pathway">
    <text evidence="1">Amino-acid biosynthesis; L-proline biosynthesis; L-proline from L-glutamate 5-semialdehyde: step 1/1.</text>
</comment>
<comment type="subcellular location">
    <subcellularLocation>
        <location evidence="1">Cytoplasm</location>
    </subcellularLocation>
</comment>
<comment type="similarity">
    <text evidence="1">Belongs to the pyrroline-5-carboxylate reductase family.</text>
</comment>
<gene>
    <name evidence="1" type="primary">proC</name>
    <name type="ordered locus">jhp_1085</name>
</gene>
<protein>
    <recommendedName>
        <fullName evidence="1">Pyrroline-5-carboxylate reductase</fullName>
        <shortName evidence="1">P5C reductase</shortName>
        <shortName evidence="1">P5CR</shortName>
        <ecNumber evidence="1">1.5.1.2</ecNumber>
    </recommendedName>
    <alternativeName>
        <fullName evidence="1">PCA reductase</fullName>
    </alternativeName>
</protein>
<organism>
    <name type="scientific">Helicobacter pylori (strain J99 / ATCC 700824)</name>
    <name type="common">Campylobacter pylori J99</name>
    <dbReference type="NCBI Taxonomy" id="85963"/>
    <lineage>
        <taxon>Bacteria</taxon>
        <taxon>Pseudomonadati</taxon>
        <taxon>Campylobacterota</taxon>
        <taxon>Epsilonproteobacteria</taxon>
        <taxon>Campylobacterales</taxon>
        <taxon>Helicobacteraceae</taxon>
        <taxon>Helicobacter</taxon>
    </lineage>
</organism>
<sequence>MEILQFIGYGNMAQAILEGSHEILSKRFILEITGRNPEKIAPFLQEKNIQAQIVPYKDAIDIHQKFVFLLFKPYNLKDFNYQGQAKSVLSALAGVNFEALSNAINSLHYLKCMPNIASKFALSSTAVCEKSVAPSISEKALNIIESFGNCVRVGNEEQVDSSVATNGSALAFLSLVASSLKDAGIREGLNAKDSLELVKMSFKGFAKLLEKERPEMIIEQICTPKGATIEGLSVLEKKGVRGAFIKACHESVKKMRL</sequence>
<name>P5CR_HELPJ</name>
<proteinExistence type="inferred from homology"/>